<feature type="chain" id="PRO_0000181926" description="Ribosome maturation factor RimP">
    <location>
        <begin position="1"/>
        <end position="155"/>
    </location>
</feature>
<proteinExistence type="inferred from homology"/>
<reference key="1">
    <citation type="journal article" date="2005" name="J. Bacteriol.">
        <title>Insights on evolution of virulence and resistance from the complete genome analysis of an early methicillin-resistant Staphylococcus aureus strain and a biofilm-producing methicillin-resistant Staphylococcus epidermidis strain.</title>
        <authorList>
            <person name="Gill S.R."/>
            <person name="Fouts D.E."/>
            <person name="Archer G.L."/>
            <person name="Mongodin E.F."/>
            <person name="DeBoy R.T."/>
            <person name="Ravel J."/>
            <person name="Paulsen I.T."/>
            <person name="Kolonay J.F."/>
            <person name="Brinkac L.M."/>
            <person name="Beanan M.J."/>
            <person name="Dodson R.J."/>
            <person name="Daugherty S.C."/>
            <person name="Madupu R."/>
            <person name="Angiuoli S.V."/>
            <person name="Durkin A.S."/>
            <person name="Haft D.H."/>
            <person name="Vamathevan J.J."/>
            <person name="Khouri H."/>
            <person name="Utterback T.R."/>
            <person name="Lee C."/>
            <person name="Dimitrov G."/>
            <person name="Jiang L."/>
            <person name="Qin H."/>
            <person name="Weidman J."/>
            <person name="Tran K."/>
            <person name="Kang K.H."/>
            <person name="Hance I.R."/>
            <person name="Nelson K.E."/>
            <person name="Fraser C.M."/>
        </authorList>
    </citation>
    <scope>NUCLEOTIDE SEQUENCE [LARGE SCALE GENOMIC DNA]</scope>
    <source>
        <strain>ATCC 35984 / DSM 28319 / BCRC 17069 / CCUG 31568 / BM 3577 / RP62A</strain>
    </source>
</reference>
<organism>
    <name type="scientific">Staphylococcus epidermidis (strain ATCC 35984 / DSM 28319 / BCRC 17069 / CCUG 31568 / BM 3577 / RP62A)</name>
    <dbReference type="NCBI Taxonomy" id="176279"/>
    <lineage>
        <taxon>Bacteria</taxon>
        <taxon>Bacillati</taxon>
        <taxon>Bacillota</taxon>
        <taxon>Bacilli</taxon>
        <taxon>Bacillales</taxon>
        <taxon>Staphylococcaceae</taxon>
        <taxon>Staphylococcus</taxon>
    </lineage>
</organism>
<gene>
    <name evidence="1" type="primary">rimP</name>
    <name type="ordered locus">SERP0832</name>
</gene>
<dbReference type="EMBL" id="CP000029">
    <property type="protein sequence ID" value="AAW54193.1"/>
    <property type="molecule type" value="Genomic_DNA"/>
</dbReference>
<dbReference type="RefSeq" id="WP_002439519.1">
    <property type="nucleotide sequence ID" value="NC_002976.3"/>
</dbReference>
<dbReference type="SMR" id="Q5HPS6"/>
<dbReference type="STRING" id="176279.SERP0832"/>
<dbReference type="GeneID" id="50018923"/>
<dbReference type="KEGG" id="ser:SERP0832"/>
<dbReference type="eggNOG" id="COG0779">
    <property type="taxonomic scope" value="Bacteria"/>
</dbReference>
<dbReference type="HOGENOM" id="CLU_070525_2_0_9"/>
<dbReference type="Proteomes" id="UP000000531">
    <property type="component" value="Chromosome"/>
</dbReference>
<dbReference type="GO" id="GO:0005829">
    <property type="term" value="C:cytosol"/>
    <property type="evidence" value="ECO:0007669"/>
    <property type="project" value="TreeGrafter"/>
</dbReference>
<dbReference type="GO" id="GO:0000028">
    <property type="term" value="P:ribosomal small subunit assembly"/>
    <property type="evidence" value="ECO:0007669"/>
    <property type="project" value="TreeGrafter"/>
</dbReference>
<dbReference type="GO" id="GO:0006412">
    <property type="term" value="P:translation"/>
    <property type="evidence" value="ECO:0007669"/>
    <property type="project" value="TreeGrafter"/>
</dbReference>
<dbReference type="CDD" id="cd01734">
    <property type="entry name" value="YlxS_C"/>
    <property type="match status" value="1"/>
</dbReference>
<dbReference type="FunFam" id="3.30.300.70:FF:000001">
    <property type="entry name" value="Ribosome maturation factor RimP"/>
    <property type="match status" value="1"/>
</dbReference>
<dbReference type="Gene3D" id="2.30.30.180">
    <property type="entry name" value="Ribosome maturation factor RimP, C-terminal domain"/>
    <property type="match status" value="1"/>
</dbReference>
<dbReference type="Gene3D" id="3.30.300.70">
    <property type="entry name" value="RimP-like superfamily, N-terminal"/>
    <property type="match status" value="1"/>
</dbReference>
<dbReference type="HAMAP" id="MF_01077">
    <property type="entry name" value="RimP"/>
    <property type="match status" value="1"/>
</dbReference>
<dbReference type="InterPro" id="IPR003728">
    <property type="entry name" value="Ribosome_maturation_RimP"/>
</dbReference>
<dbReference type="InterPro" id="IPR028998">
    <property type="entry name" value="RimP_C"/>
</dbReference>
<dbReference type="InterPro" id="IPR036847">
    <property type="entry name" value="RimP_C_sf"/>
</dbReference>
<dbReference type="InterPro" id="IPR028989">
    <property type="entry name" value="RimP_N"/>
</dbReference>
<dbReference type="InterPro" id="IPR035956">
    <property type="entry name" value="RimP_N_sf"/>
</dbReference>
<dbReference type="NCBIfam" id="NF000928">
    <property type="entry name" value="PRK00092.1-2"/>
    <property type="match status" value="1"/>
</dbReference>
<dbReference type="PANTHER" id="PTHR33867">
    <property type="entry name" value="RIBOSOME MATURATION FACTOR RIMP"/>
    <property type="match status" value="1"/>
</dbReference>
<dbReference type="PANTHER" id="PTHR33867:SF1">
    <property type="entry name" value="RIBOSOME MATURATION FACTOR RIMP"/>
    <property type="match status" value="1"/>
</dbReference>
<dbReference type="Pfam" id="PF17384">
    <property type="entry name" value="DUF150_C"/>
    <property type="match status" value="1"/>
</dbReference>
<dbReference type="Pfam" id="PF02576">
    <property type="entry name" value="RimP_N"/>
    <property type="match status" value="1"/>
</dbReference>
<dbReference type="SUPFAM" id="SSF74942">
    <property type="entry name" value="YhbC-like, C-terminal domain"/>
    <property type="match status" value="1"/>
</dbReference>
<dbReference type="SUPFAM" id="SSF75420">
    <property type="entry name" value="YhbC-like, N-terminal domain"/>
    <property type="match status" value="1"/>
</dbReference>
<sequence>MSKITEQVEALIQPVLNDLNFELVDIEYVKEGKDHFLRISIDKEGGVDLNDCTIASEKISEVMDENDPIPEMYYLDVASPGAERPIKKEKDFYNAINQPIFVSLYAPIEGDKEWLGVLKSVNDESINMEVKEKAKTKEIEIPRNKIAKARHAVMI</sequence>
<evidence type="ECO:0000255" key="1">
    <source>
        <dbReference type="HAMAP-Rule" id="MF_01077"/>
    </source>
</evidence>
<comment type="function">
    <text evidence="1">Required for maturation of 30S ribosomal subunits.</text>
</comment>
<comment type="subcellular location">
    <subcellularLocation>
        <location evidence="1">Cytoplasm</location>
    </subcellularLocation>
</comment>
<comment type="similarity">
    <text evidence="1">Belongs to the RimP family.</text>
</comment>
<accession>Q5HPS6</accession>
<name>RIMP_STAEQ</name>
<keyword id="KW-0963">Cytoplasm</keyword>
<keyword id="KW-1185">Reference proteome</keyword>
<keyword id="KW-0690">Ribosome biogenesis</keyword>
<protein>
    <recommendedName>
        <fullName evidence="1">Ribosome maturation factor RimP</fullName>
    </recommendedName>
</protein>